<proteinExistence type="evidence at protein level"/>
<gene>
    <name evidence="7" type="primary">Pde1b</name>
    <name type="synonym">Pde1b1</name>
</gene>
<reference key="1">
    <citation type="journal article" date="1992" name="Proc. Natl. Acad. Sci. U.S.A.">
        <title>Molecular cloning of DNA encoding a calmodulin-dependent phosphodiesterase enriched in striatum.</title>
        <authorList>
            <person name="Polli J.W."/>
            <person name="Kincaid R.L."/>
        </authorList>
    </citation>
    <scope>NUCLEOTIDE SEQUENCE [MRNA]</scope>
</reference>
<reference key="2">
    <citation type="journal article" date="1998" name="Mamm. Genome">
        <title>Genomic structure and chromosome location of the murine PDE1B phosphodiesterase gene.</title>
        <authorList>
            <person name="Reed T.M."/>
            <person name="Browning J.E."/>
            <person name="Blough R.I."/>
            <person name="Vorhees C.V."/>
            <person name="Repaske D.R."/>
        </authorList>
    </citation>
    <scope>NUCLEOTIDE SEQUENCE [GENOMIC DNA] OF 38-535</scope>
    <source>
        <strain>129/SvJ</strain>
    </source>
</reference>
<reference key="3">
    <citation type="journal article" date="1992" name="J. Biol. Chem.">
        <title>A polymerase chain reaction strategy to identify and clone cyclic nucleotide phosphodiesterase cDNAs. Molecular cloning of the cDNA encoding the 63-kDa calmodulin-dependent phosphodiesterase.</title>
        <authorList>
            <person name="Repaske D.R."/>
            <person name="Swinnen J.V."/>
            <person name="Jin S.-L.C."/>
            <person name="van Wyk J.J."/>
            <person name="Conti M."/>
        </authorList>
    </citation>
    <scope>NUCLEOTIDE SEQUENCE [MRNA] OF 221-336</scope>
</reference>
<reference key="4">
    <citation type="journal article" date="2004" name="Mol. Cell. Proteomics">
        <title>Phosphoproteomic analysis of the developing mouse brain.</title>
        <authorList>
            <person name="Ballif B.A."/>
            <person name="Villen J."/>
            <person name="Beausoleil S.A."/>
            <person name="Schwartz D."/>
            <person name="Gygi S.P."/>
        </authorList>
    </citation>
    <scope>PHOSPHORYLATION [LARGE SCALE ANALYSIS] AT SER-465</scope>
    <scope>IDENTIFICATION BY MASS SPECTROMETRY [LARGE SCALE ANALYSIS]</scope>
    <source>
        <tissue>Embryonic brain</tissue>
    </source>
</reference>
<reference key="5">
    <citation type="journal article" date="2010" name="Cell">
        <title>A tissue-specific atlas of mouse protein phosphorylation and expression.</title>
        <authorList>
            <person name="Huttlin E.L."/>
            <person name="Jedrychowski M.P."/>
            <person name="Elias J.E."/>
            <person name="Goswami T."/>
            <person name="Rad R."/>
            <person name="Beausoleil S.A."/>
            <person name="Villen J."/>
            <person name="Haas W."/>
            <person name="Sowa M.E."/>
            <person name="Gygi S.P."/>
        </authorList>
    </citation>
    <scope>PHOSPHORYLATION [LARGE SCALE ANALYSIS] AT SER-7; SER-14; SER-465 AND SER-513</scope>
    <scope>IDENTIFICATION BY MASS SPECTROMETRY [LARGE SCALE ANALYSIS]</scope>
    <source>
        <tissue>Brain</tissue>
        <tissue>Liver</tissue>
    </source>
</reference>
<keyword id="KW-0112">Calmodulin-binding</keyword>
<keyword id="KW-0114">cAMP</keyword>
<keyword id="KW-0140">cGMP</keyword>
<keyword id="KW-0963">Cytoplasm</keyword>
<keyword id="KW-0378">Hydrolase</keyword>
<keyword id="KW-0460">Magnesium</keyword>
<keyword id="KW-0479">Metal-binding</keyword>
<keyword id="KW-0597">Phosphoprotein</keyword>
<keyword id="KW-1185">Reference proteome</keyword>
<keyword id="KW-0862">Zinc</keyword>
<comment type="function">
    <text evidence="3">Cyclic nucleotide phosphodiesterase with a dual specificity for the second messengers cAMP and cGMP, which are key regulators of many important physiological processes. Has a preference for cGMP as a substrate.</text>
</comment>
<comment type="catalytic activity">
    <reaction evidence="3">
        <text>a nucleoside 3',5'-cyclic phosphate + H2O = a nucleoside 5'-phosphate + H(+)</text>
        <dbReference type="Rhea" id="RHEA:14653"/>
        <dbReference type="ChEBI" id="CHEBI:15377"/>
        <dbReference type="ChEBI" id="CHEBI:15378"/>
        <dbReference type="ChEBI" id="CHEBI:57867"/>
        <dbReference type="ChEBI" id="CHEBI:58464"/>
        <dbReference type="EC" id="3.1.4.17"/>
    </reaction>
    <physiologicalReaction direction="left-to-right" evidence="3">
        <dbReference type="Rhea" id="RHEA:14654"/>
    </physiologicalReaction>
</comment>
<comment type="catalytic activity">
    <reaction evidence="3">
        <text>3',5'-cyclic GMP + H2O = GMP + H(+)</text>
        <dbReference type="Rhea" id="RHEA:16957"/>
        <dbReference type="ChEBI" id="CHEBI:15377"/>
        <dbReference type="ChEBI" id="CHEBI:15378"/>
        <dbReference type="ChEBI" id="CHEBI:57746"/>
        <dbReference type="ChEBI" id="CHEBI:58115"/>
    </reaction>
    <physiologicalReaction direction="left-to-right" evidence="3">
        <dbReference type="Rhea" id="RHEA:16958"/>
    </physiologicalReaction>
</comment>
<comment type="catalytic activity">
    <reaction evidence="3">
        <text>3',5'-cyclic AMP + H2O = AMP + H(+)</text>
        <dbReference type="Rhea" id="RHEA:25277"/>
        <dbReference type="ChEBI" id="CHEBI:15377"/>
        <dbReference type="ChEBI" id="CHEBI:15378"/>
        <dbReference type="ChEBI" id="CHEBI:58165"/>
        <dbReference type="ChEBI" id="CHEBI:456215"/>
    </reaction>
    <physiologicalReaction direction="left-to-right" evidence="3">
        <dbReference type="Rhea" id="RHEA:25278"/>
    </physiologicalReaction>
</comment>
<comment type="cofactor">
    <cofactor evidence="3">
        <name>Zn(2+)</name>
        <dbReference type="ChEBI" id="CHEBI:29105"/>
    </cofactor>
    <text evidence="3">Binds 2 divalent metal cations per subunit. Site 1 may preferentially bind zinc ions.</text>
</comment>
<comment type="cofactor">
    <cofactor evidence="3">
        <name>Mg(2+)</name>
        <dbReference type="ChEBI" id="CHEBI:18420"/>
    </cofactor>
    <text evidence="3">Binds 2 divalent metal cations per subunit. Site 2 has a preference for magnesium ions.</text>
</comment>
<comment type="activity regulation">
    <text evidence="3">Type I PDE are activated by the binding of calmodulin in the presence of Ca(2+).</text>
</comment>
<comment type="subunit">
    <text evidence="2">Homodimer.</text>
</comment>
<comment type="subcellular location">
    <subcellularLocation>
        <location evidence="3">Cytoplasm</location>
        <location evidence="3">Cytosol</location>
    </subcellularLocation>
</comment>
<comment type="similarity">
    <text evidence="6">Belongs to the cyclic nucleotide phosphodiesterase family. PDE1 subfamily.</text>
</comment>
<evidence type="ECO:0000250" key="1">
    <source>
        <dbReference type="UniProtKB" id="O76083"/>
    </source>
</evidence>
<evidence type="ECO:0000250" key="2">
    <source>
        <dbReference type="UniProtKB" id="P14100"/>
    </source>
</evidence>
<evidence type="ECO:0000250" key="3">
    <source>
        <dbReference type="UniProtKB" id="Q01064"/>
    </source>
</evidence>
<evidence type="ECO:0000255" key="4">
    <source>
        <dbReference type="PROSITE-ProRule" id="PRU01192"/>
    </source>
</evidence>
<evidence type="ECO:0000256" key="5">
    <source>
        <dbReference type="SAM" id="MobiDB-lite"/>
    </source>
</evidence>
<evidence type="ECO:0000305" key="6"/>
<evidence type="ECO:0000312" key="7">
    <source>
        <dbReference type="MGI" id="MGI:97523"/>
    </source>
</evidence>
<evidence type="ECO:0007744" key="8">
    <source>
    </source>
</evidence>
<evidence type="ECO:0007744" key="9">
    <source>
    </source>
</evidence>
<accession>Q01065</accession>
<accession>O35384</accession>
<feature type="chain" id="PRO_0000198790" description="Dual specificity calcium/calmodulin-dependent 3',5'-cyclic nucleotide phosphodiesterase 1B">
    <location>
        <begin position="1"/>
        <end position="535"/>
    </location>
</feature>
<feature type="domain" description="PDEase" evidence="4">
    <location>
        <begin position="145"/>
        <end position="502"/>
    </location>
</feature>
<feature type="region of interest" description="Disordered" evidence="5">
    <location>
        <begin position="1"/>
        <end position="21"/>
    </location>
</feature>
<feature type="region of interest" description="Calmodulin-binding" evidence="2">
    <location>
        <begin position="27"/>
        <end position="47"/>
    </location>
</feature>
<feature type="region of interest" description="Calmodulin-binding" evidence="2">
    <location>
        <begin position="117"/>
        <end position="140"/>
    </location>
</feature>
<feature type="region of interest" description="Disordered" evidence="5">
    <location>
        <begin position="444"/>
        <end position="474"/>
    </location>
</feature>
<feature type="region of interest" description="Disordered" evidence="5">
    <location>
        <begin position="495"/>
        <end position="535"/>
    </location>
</feature>
<feature type="compositionally biased region" description="Polar residues" evidence="5">
    <location>
        <begin position="454"/>
        <end position="463"/>
    </location>
</feature>
<feature type="active site" description="Proton donor" evidence="1">
    <location>
        <position position="222"/>
    </location>
</feature>
<feature type="binding site" evidence="3">
    <location>
        <position position="226"/>
    </location>
    <ligand>
        <name>Zn(2+)</name>
        <dbReference type="ChEBI" id="CHEBI:29105"/>
    </ligand>
</feature>
<feature type="binding site" evidence="3">
    <location>
        <position position="262"/>
    </location>
    <ligand>
        <name>Zn(2+)</name>
        <dbReference type="ChEBI" id="CHEBI:29105"/>
    </ligand>
</feature>
<feature type="binding site" evidence="3">
    <location>
        <position position="263"/>
    </location>
    <ligand>
        <name>Mg(2+)</name>
        <dbReference type="ChEBI" id="CHEBI:18420"/>
    </ligand>
</feature>
<feature type="binding site" evidence="3">
    <location>
        <position position="263"/>
    </location>
    <ligand>
        <name>Zn(2+)</name>
        <dbReference type="ChEBI" id="CHEBI:29105"/>
    </ligand>
</feature>
<feature type="binding site" evidence="3">
    <location>
        <position position="369"/>
    </location>
    <ligand>
        <name>Zn(2+)</name>
        <dbReference type="ChEBI" id="CHEBI:29105"/>
    </ligand>
</feature>
<feature type="modified residue" description="Phosphoserine" evidence="9">
    <location>
        <position position="7"/>
    </location>
</feature>
<feature type="modified residue" description="Phosphoserine" evidence="9">
    <location>
        <position position="14"/>
    </location>
</feature>
<feature type="modified residue" description="Phosphoserine" evidence="8 9">
    <location>
        <position position="465"/>
    </location>
</feature>
<feature type="modified residue" description="Phosphoserine" evidence="9">
    <location>
        <position position="513"/>
    </location>
</feature>
<feature type="sequence conflict" description="In Ref. 2." evidence="6" ref="2">
    <original>L</original>
    <variation>M</variation>
    <location>
        <position position="38"/>
    </location>
</feature>
<feature type="sequence conflict" description="In Ref. 3; AAA37367." evidence="6" ref="3">
    <original>Q</original>
    <variation>R</variation>
    <location>
        <position position="224"/>
    </location>
</feature>
<organism>
    <name type="scientific">Mus musculus</name>
    <name type="common">Mouse</name>
    <dbReference type="NCBI Taxonomy" id="10090"/>
    <lineage>
        <taxon>Eukaryota</taxon>
        <taxon>Metazoa</taxon>
        <taxon>Chordata</taxon>
        <taxon>Craniata</taxon>
        <taxon>Vertebrata</taxon>
        <taxon>Euteleostomi</taxon>
        <taxon>Mammalia</taxon>
        <taxon>Eutheria</taxon>
        <taxon>Euarchontoglires</taxon>
        <taxon>Glires</taxon>
        <taxon>Rodentia</taxon>
        <taxon>Myomorpha</taxon>
        <taxon>Muroidea</taxon>
        <taxon>Muridae</taxon>
        <taxon>Murinae</taxon>
        <taxon>Mus</taxon>
        <taxon>Mus</taxon>
    </lineage>
</organism>
<sequence>MELSPRSPPEMLESDCPSPLELKSAPSKKMWIKLRSLLRYMVKQLENGEVNIEELKKNLEYTASLLEAVYIDETRQILDTEDELRELRSDAVPSEVRDWLASTFTQQTRAKGRRAEEKPKFRSIVHAVQAGIFVERMFRRTYTSVGPTYSTAVHNCLKNLDLWCFDVFSLNRAADDHALRTIVFELLTRHSLISRFKIPTVFLMSFLEALETGYGKYKNPYHNQIHAADVTQTVHCFLLRTGMVHCLSEIEVLAIIFAAAIHDYEHTGTTNSFHIQTKSECAILYNDRSVLENHHISSVFRMMQDDEMNIFINLTKDEFAELRALVIEMVLATDMSCHFQQVKTMKTALQQLERIDKSKALSLLLHAADISHPTKQWSVHSRWTKALMEEFFRQGDKEAELGLPFSPLCDRTSTLVAQSQIGFIDFIVEPTFSVLTDVAEKSVQPLADDDSKPKSQPSFQWRQPSLDVDVGDPNPDVVSFRATWTKYIQENKQKWKERAASGITNQMSIDELSPCEEEAPSSPAEDEHNQNGNLD</sequence>
<name>PDE1B_MOUSE</name>
<protein>
    <recommendedName>
        <fullName evidence="3">Dual specificity calcium/calmodulin-dependent 3',5'-cyclic nucleotide phosphodiesterase 1B</fullName>
        <shortName>Cam-PDE 1B</shortName>
        <ecNumber evidence="3">3.1.4.17</ecNumber>
    </recommendedName>
    <alternativeName>
        <fullName>63 kDa Cam-PDE</fullName>
    </alternativeName>
</protein>
<dbReference type="EC" id="3.1.4.17" evidence="3"/>
<dbReference type="EMBL" id="L01695">
    <property type="protein sequence ID" value="AAA39902.1"/>
    <property type="molecule type" value="mRNA"/>
</dbReference>
<dbReference type="EMBL" id="AH007066">
    <property type="protein sequence ID" value="AAC96022.1"/>
    <property type="molecule type" value="Genomic_DNA"/>
</dbReference>
<dbReference type="EMBL" id="M94538">
    <property type="protein sequence ID" value="AAA37367.1"/>
    <property type="molecule type" value="mRNA"/>
</dbReference>
<dbReference type="CCDS" id="CCDS27904.1"/>
<dbReference type="PIR" id="A46378">
    <property type="entry name" value="A46378"/>
</dbReference>
<dbReference type="RefSeq" id="NP_032826.1">
    <property type="nucleotide sequence ID" value="NM_008800.2"/>
</dbReference>
<dbReference type="SMR" id="Q01065"/>
<dbReference type="BioGRID" id="202075">
    <property type="interactions" value="10"/>
</dbReference>
<dbReference type="FunCoup" id="Q01065">
    <property type="interactions" value="1741"/>
</dbReference>
<dbReference type="IntAct" id="Q01065">
    <property type="interactions" value="1"/>
</dbReference>
<dbReference type="STRING" id="10090.ENSMUSP00000023132"/>
<dbReference type="GlyGen" id="Q01065">
    <property type="glycosylation" value="2 sites, 1 O-linked glycan (1 site)"/>
</dbReference>
<dbReference type="iPTMnet" id="Q01065"/>
<dbReference type="PhosphoSitePlus" id="Q01065"/>
<dbReference type="PaxDb" id="10090-ENSMUSP00000023132"/>
<dbReference type="PeptideAtlas" id="Q01065"/>
<dbReference type="ProteomicsDB" id="287804"/>
<dbReference type="Antibodypedia" id="15408">
    <property type="antibodies" value="408 antibodies from 31 providers"/>
</dbReference>
<dbReference type="DNASU" id="18574"/>
<dbReference type="Ensembl" id="ENSMUST00000023132.5">
    <property type="protein sequence ID" value="ENSMUSP00000023132.4"/>
    <property type="gene ID" value="ENSMUSG00000022489.7"/>
</dbReference>
<dbReference type="GeneID" id="18574"/>
<dbReference type="KEGG" id="mmu:18574"/>
<dbReference type="UCSC" id="uc007xyh.2">
    <property type="organism name" value="mouse"/>
</dbReference>
<dbReference type="AGR" id="MGI:97523"/>
<dbReference type="CTD" id="5153"/>
<dbReference type="MGI" id="MGI:97523">
    <property type="gene designation" value="Pde1b"/>
</dbReference>
<dbReference type="VEuPathDB" id="HostDB:ENSMUSG00000022489"/>
<dbReference type="eggNOG" id="KOG3688">
    <property type="taxonomic scope" value="Eukaryota"/>
</dbReference>
<dbReference type="GeneTree" id="ENSGT00940000160712"/>
<dbReference type="HOGENOM" id="CLU_005940_1_0_1"/>
<dbReference type="InParanoid" id="Q01065"/>
<dbReference type="OMA" id="KIQWKDS"/>
<dbReference type="OrthoDB" id="189220at2759"/>
<dbReference type="PhylomeDB" id="Q01065"/>
<dbReference type="TreeFam" id="TF314638"/>
<dbReference type="BRENDA" id="3.1.4.17">
    <property type="organism ID" value="3474"/>
</dbReference>
<dbReference type="Reactome" id="R-MMU-111957">
    <property type="pathway name" value="Cam-PDE 1 activation"/>
</dbReference>
<dbReference type="Reactome" id="R-MMU-418457">
    <property type="pathway name" value="cGMP effects"/>
</dbReference>
<dbReference type="Reactome" id="R-MMU-418555">
    <property type="pathway name" value="G alpha (s) signalling events"/>
</dbReference>
<dbReference type="BioGRID-ORCS" id="18574">
    <property type="hits" value="5 hits in 76 CRISPR screens"/>
</dbReference>
<dbReference type="CD-CODE" id="CE726F99">
    <property type="entry name" value="Postsynaptic density"/>
</dbReference>
<dbReference type="PRO" id="PR:Q01065"/>
<dbReference type="Proteomes" id="UP000000589">
    <property type="component" value="Chromosome 15"/>
</dbReference>
<dbReference type="RNAct" id="Q01065">
    <property type="molecule type" value="protein"/>
</dbReference>
<dbReference type="Bgee" id="ENSMUSG00000022489">
    <property type="expression patterns" value="Expressed in caudate-putamen and 212 other cell types or tissues"/>
</dbReference>
<dbReference type="ExpressionAtlas" id="Q01065">
    <property type="expression patterns" value="baseline and differential"/>
</dbReference>
<dbReference type="GO" id="GO:0005829">
    <property type="term" value="C:cytosol"/>
    <property type="evidence" value="ECO:0000250"/>
    <property type="project" value="UniProtKB"/>
</dbReference>
<dbReference type="GO" id="GO:0043025">
    <property type="term" value="C:neuronal cell body"/>
    <property type="evidence" value="ECO:0007669"/>
    <property type="project" value="Ensembl"/>
</dbReference>
<dbReference type="GO" id="GO:0005516">
    <property type="term" value="F:calmodulin binding"/>
    <property type="evidence" value="ECO:0007669"/>
    <property type="project" value="UniProtKB-KW"/>
</dbReference>
<dbReference type="GO" id="GO:0048101">
    <property type="term" value="F:calmodulin-activated 3',5'-cyclic-GMP phosphodiesterase activity"/>
    <property type="evidence" value="ECO:0000266"/>
    <property type="project" value="MGI"/>
</dbReference>
<dbReference type="GO" id="GO:0004117">
    <property type="term" value="F:calmodulin-activated dual specificity 3',5'-cyclic-GMP, 3',5'-cyclic-AMP phosphodiesterase activity"/>
    <property type="evidence" value="ECO:0000250"/>
    <property type="project" value="UniProtKB"/>
</dbReference>
<dbReference type="GO" id="GO:0004112">
    <property type="term" value="F:cyclic-nucleotide phosphodiesterase activity"/>
    <property type="evidence" value="ECO:0000266"/>
    <property type="project" value="MGI"/>
</dbReference>
<dbReference type="GO" id="GO:0046872">
    <property type="term" value="F:metal ion binding"/>
    <property type="evidence" value="ECO:0007669"/>
    <property type="project" value="UniProtKB-KW"/>
</dbReference>
<dbReference type="GO" id="GO:0097011">
    <property type="term" value="P:cellular response to granulocyte macrophage colony-stimulating factor stimulus"/>
    <property type="evidence" value="ECO:0007669"/>
    <property type="project" value="Ensembl"/>
</dbReference>
<dbReference type="GO" id="GO:0036006">
    <property type="term" value="P:cellular response to macrophage colony-stimulating factor stimulus"/>
    <property type="evidence" value="ECO:0007669"/>
    <property type="project" value="Ensembl"/>
</dbReference>
<dbReference type="GO" id="GO:0042420">
    <property type="term" value="P:dopamine catabolic process"/>
    <property type="evidence" value="ECO:0000315"/>
    <property type="project" value="MGI"/>
</dbReference>
<dbReference type="GO" id="GO:0007626">
    <property type="term" value="P:locomotory behavior"/>
    <property type="evidence" value="ECO:0000315"/>
    <property type="project" value="MGI"/>
</dbReference>
<dbReference type="GO" id="GO:0030224">
    <property type="term" value="P:monocyte differentiation"/>
    <property type="evidence" value="ECO:0007669"/>
    <property type="project" value="Ensembl"/>
</dbReference>
<dbReference type="GO" id="GO:0001975">
    <property type="term" value="P:response to amphetamine"/>
    <property type="evidence" value="ECO:0000315"/>
    <property type="project" value="MGI"/>
</dbReference>
<dbReference type="GO" id="GO:0042428">
    <property type="term" value="P:serotonin metabolic process"/>
    <property type="evidence" value="ECO:0000315"/>
    <property type="project" value="MGI"/>
</dbReference>
<dbReference type="GO" id="GO:0007165">
    <property type="term" value="P:signal transduction"/>
    <property type="evidence" value="ECO:0000315"/>
    <property type="project" value="MGI"/>
</dbReference>
<dbReference type="GO" id="GO:0008542">
    <property type="term" value="P:visual learning"/>
    <property type="evidence" value="ECO:0000315"/>
    <property type="project" value="MGI"/>
</dbReference>
<dbReference type="CDD" id="cd00077">
    <property type="entry name" value="HDc"/>
    <property type="match status" value="1"/>
</dbReference>
<dbReference type="FunFam" id="1.10.1300.10:FF:000012">
    <property type="entry name" value="Phosphodiesterase"/>
    <property type="match status" value="1"/>
</dbReference>
<dbReference type="Gene3D" id="1.10.1300.10">
    <property type="entry name" value="3'5'-cyclic nucleotide phosphodiesterase, catalytic domain"/>
    <property type="match status" value="1"/>
</dbReference>
<dbReference type="InterPro" id="IPR003607">
    <property type="entry name" value="HD/PDEase_dom"/>
</dbReference>
<dbReference type="InterPro" id="IPR023088">
    <property type="entry name" value="PDEase"/>
</dbReference>
<dbReference type="InterPro" id="IPR002073">
    <property type="entry name" value="PDEase_catalytic_dom"/>
</dbReference>
<dbReference type="InterPro" id="IPR036971">
    <property type="entry name" value="PDEase_catalytic_dom_sf"/>
</dbReference>
<dbReference type="InterPro" id="IPR023174">
    <property type="entry name" value="PDEase_CS"/>
</dbReference>
<dbReference type="InterPro" id="IPR013706">
    <property type="entry name" value="PDEase_N"/>
</dbReference>
<dbReference type="PANTHER" id="PTHR11347">
    <property type="entry name" value="CYCLIC NUCLEOTIDE PHOSPHODIESTERASE"/>
    <property type="match status" value="1"/>
</dbReference>
<dbReference type="Pfam" id="PF00233">
    <property type="entry name" value="PDEase_I"/>
    <property type="match status" value="1"/>
</dbReference>
<dbReference type="Pfam" id="PF08499">
    <property type="entry name" value="PDEase_I_N"/>
    <property type="match status" value="1"/>
</dbReference>
<dbReference type="PRINTS" id="PR00387">
    <property type="entry name" value="PDIESTERASE1"/>
</dbReference>
<dbReference type="SMART" id="SM00471">
    <property type="entry name" value="HDc"/>
    <property type="match status" value="1"/>
</dbReference>
<dbReference type="SUPFAM" id="SSF109604">
    <property type="entry name" value="HD-domain/PDEase-like"/>
    <property type="match status" value="1"/>
</dbReference>
<dbReference type="PROSITE" id="PS00126">
    <property type="entry name" value="PDEASE_I_1"/>
    <property type="match status" value="1"/>
</dbReference>
<dbReference type="PROSITE" id="PS51845">
    <property type="entry name" value="PDEASE_I_2"/>
    <property type="match status" value="1"/>
</dbReference>